<dbReference type="EC" id="2.1.1.199" evidence="1"/>
<dbReference type="EMBL" id="AM884176">
    <property type="protein sequence ID" value="CAP03964.1"/>
    <property type="molecule type" value="Genomic_DNA"/>
</dbReference>
<dbReference type="RefSeq" id="WP_009873689.1">
    <property type="nucleotide sequence ID" value="NC_010287.1"/>
</dbReference>
<dbReference type="RefSeq" id="YP_001654601.1">
    <property type="nucleotide sequence ID" value="NC_010287.1"/>
</dbReference>
<dbReference type="SMR" id="B0B7I8"/>
<dbReference type="KEGG" id="ctb:CTL0524"/>
<dbReference type="PATRIC" id="fig|471472.4.peg.563"/>
<dbReference type="HOGENOM" id="CLU_038422_3_0_0"/>
<dbReference type="Proteomes" id="UP001154402">
    <property type="component" value="Chromosome"/>
</dbReference>
<dbReference type="GO" id="GO:0005737">
    <property type="term" value="C:cytoplasm"/>
    <property type="evidence" value="ECO:0007669"/>
    <property type="project" value="UniProtKB-SubCell"/>
</dbReference>
<dbReference type="GO" id="GO:0071424">
    <property type="term" value="F:rRNA (cytosine-N4-)-methyltransferase activity"/>
    <property type="evidence" value="ECO:0007669"/>
    <property type="project" value="UniProtKB-UniRule"/>
</dbReference>
<dbReference type="GO" id="GO:0070475">
    <property type="term" value="P:rRNA base methylation"/>
    <property type="evidence" value="ECO:0007669"/>
    <property type="project" value="UniProtKB-UniRule"/>
</dbReference>
<dbReference type="FunFam" id="1.10.150.170:FF:000003">
    <property type="entry name" value="Ribosomal RNA small subunit methyltransferase H"/>
    <property type="match status" value="1"/>
</dbReference>
<dbReference type="Gene3D" id="1.10.150.170">
    <property type="entry name" value="Putative methyltransferase TM0872, insert domain"/>
    <property type="match status" value="1"/>
</dbReference>
<dbReference type="Gene3D" id="3.40.50.150">
    <property type="entry name" value="Vaccinia Virus protein VP39"/>
    <property type="match status" value="1"/>
</dbReference>
<dbReference type="HAMAP" id="MF_01007">
    <property type="entry name" value="16SrRNA_methyltr_H"/>
    <property type="match status" value="1"/>
</dbReference>
<dbReference type="InterPro" id="IPR002903">
    <property type="entry name" value="RsmH"/>
</dbReference>
<dbReference type="InterPro" id="IPR023397">
    <property type="entry name" value="SAM-dep_MeTrfase_MraW_recog"/>
</dbReference>
<dbReference type="InterPro" id="IPR029063">
    <property type="entry name" value="SAM-dependent_MTases_sf"/>
</dbReference>
<dbReference type="NCBIfam" id="TIGR00006">
    <property type="entry name" value="16S rRNA (cytosine(1402)-N(4))-methyltransferase RsmH"/>
    <property type="match status" value="1"/>
</dbReference>
<dbReference type="PANTHER" id="PTHR11265:SF0">
    <property type="entry name" value="12S RRNA N4-METHYLCYTIDINE METHYLTRANSFERASE"/>
    <property type="match status" value="1"/>
</dbReference>
<dbReference type="PANTHER" id="PTHR11265">
    <property type="entry name" value="S-ADENOSYL-METHYLTRANSFERASE MRAW"/>
    <property type="match status" value="1"/>
</dbReference>
<dbReference type="Pfam" id="PF01795">
    <property type="entry name" value="Methyltransf_5"/>
    <property type="match status" value="1"/>
</dbReference>
<dbReference type="PIRSF" id="PIRSF004486">
    <property type="entry name" value="MraW"/>
    <property type="match status" value="1"/>
</dbReference>
<dbReference type="SUPFAM" id="SSF81799">
    <property type="entry name" value="Putative methyltransferase TM0872, insert domain"/>
    <property type="match status" value="1"/>
</dbReference>
<dbReference type="SUPFAM" id="SSF53335">
    <property type="entry name" value="S-adenosyl-L-methionine-dependent methyltransferases"/>
    <property type="match status" value="1"/>
</dbReference>
<keyword id="KW-0963">Cytoplasm</keyword>
<keyword id="KW-0489">Methyltransferase</keyword>
<keyword id="KW-0698">rRNA processing</keyword>
<keyword id="KW-0949">S-adenosyl-L-methionine</keyword>
<keyword id="KW-0808">Transferase</keyword>
<gene>
    <name evidence="1" type="primary">rsmH</name>
    <name type="synonym">mraW</name>
    <name type="ordered locus">CTL0524</name>
</gene>
<protein>
    <recommendedName>
        <fullName evidence="1">Ribosomal RNA small subunit methyltransferase H</fullName>
        <ecNumber evidence="1">2.1.1.199</ecNumber>
    </recommendedName>
    <alternativeName>
        <fullName evidence="1">16S rRNA m(4)C1402 methyltransferase</fullName>
    </alternativeName>
    <alternativeName>
        <fullName evidence="1">rRNA (cytosine-N(4)-)-methyltransferase RsmH</fullName>
    </alternativeName>
</protein>
<proteinExistence type="inferred from homology"/>
<name>RSMH_CHLT2</name>
<sequence length="300" mass="34017">MTDSIPHIPVLVKESLSLFRGRNPVVFCDVTVGAGGHAEAFLTEFPSIERYDGSDRDLSALALSENRLLPFKDRVRLRHASFEEVDTLTSDGTYDGVLADLGVSSMQLNNLERGFSFQGEDHPLDMRMDTSRGMTASEVLNSLREEEIGEIFRNYGEEPLWRSAAAAVVHFRKKKKILTVKDLKDATSGVFPSYRLRKKIHPLTLIFQALRIYVNQEGAQLKVLLDSAFRWLRPGGRLAVISFCSLDDRPVKWAFREAEARGLGKILTKKVIMPSYEETRMNPRSRSAKLRCFEKSFEDK</sequence>
<feature type="chain" id="PRO_0000386794" description="Ribosomal RNA small subunit methyltransferase H">
    <location>
        <begin position="1"/>
        <end position="300"/>
    </location>
</feature>
<feature type="binding site" evidence="1">
    <location>
        <begin position="35"/>
        <end position="37"/>
    </location>
    <ligand>
        <name>S-adenosyl-L-methionine</name>
        <dbReference type="ChEBI" id="CHEBI:59789"/>
    </ligand>
</feature>
<feature type="binding site" evidence="1">
    <location>
        <position position="55"/>
    </location>
    <ligand>
        <name>S-adenosyl-L-methionine</name>
        <dbReference type="ChEBI" id="CHEBI:59789"/>
    </ligand>
</feature>
<feature type="binding site" evidence="1">
    <location>
        <position position="82"/>
    </location>
    <ligand>
        <name>S-adenosyl-L-methionine</name>
        <dbReference type="ChEBI" id="CHEBI:59789"/>
    </ligand>
</feature>
<feature type="binding site" evidence="1">
    <location>
        <position position="100"/>
    </location>
    <ligand>
        <name>S-adenosyl-L-methionine</name>
        <dbReference type="ChEBI" id="CHEBI:59789"/>
    </ligand>
</feature>
<feature type="binding site" evidence="1">
    <location>
        <position position="107"/>
    </location>
    <ligand>
        <name>S-adenosyl-L-methionine</name>
        <dbReference type="ChEBI" id="CHEBI:59789"/>
    </ligand>
</feature>
<reference key="1">
    <citation type="journal article" date="2008" name="Genome Res.">
        <title>Chlamydia trachomatis: genome sequence analysis of lymphogranuloma venereum isolates.</title>
        <authorList>
            <person name="Thomson N.R."/>
            <person name="Holden M.T.G."/>
            <person name="Carder C."/>
            <person name="Lennard N."/>
            <person name="Lockey S.J."/>
            <person name="Marsh P."/>
            <person name="Skipp P."/>
            <person name="O'Connor C.D."/>
            <person name="Goodhead I."/>
            <person name="Norbertzcak H."/>
            <person name="Harris B."/>
            <person name="Ormond D."/>
            <person name="Rance R."/>
            <person name="Quail M.A."/>
            <person name="Parkhill J."/>
            <person name="Stephens R.S."/>
            <person name="Clarke I.N."/>
        </authorList>
    </citation>
    <scope>NUCLEOTIDE SEQUENCE [LARGE SCALE GENOMIC DNA]</scope>
    <source>
        <strain>ATCC VR-902B / DSM 19102 / 434/Bu</strain>
    </source>
</reference>
<organism>
    <name type="scientific">Chlamydia trachomatis serovar L2 (strain ATCC VR-902B / DSM 19102 / 434/Bu)</name>
    <dbReference type="NCBI Taxonomy" id="471472"/>
    <lineage>
        <taxon>Bacteria</taxon>
        <taxon>Pseudomonadati</taxon>
        <taxon>Chlamydiota</taxon>
        <taxon>Chlamydiia</taxon>
        <taxon>Chlamydiales</taxon>
        <taxon>Chlamydiaceae</taxon>
        <taxon>Chlamydia/Chlamydophila group</taxon>
        <taxon>Chlamydia</taxon>
    </lineage>
</organism>
<comment type="function">
    <text evidence="1">Specifically methylates the N4 position of cytidine in position 1402 (C1402) of 16S rRNA.</text>
</comment>
<comment type="catalytic activity">
    <reaction evidence="1">
        <text>cytidine(1402) in 16S rRNA + S-adenosyl-L-methionine = N(4)-methylcytidine(1402) in 16S rRNA + S-adenosyl-L-homocysteine + H(+)</text>
        <dbReference type="Rhea" id="RHEA:42928"/>
        <dbReference type="Rhea" id="RHEA-COMP:10286"/>
        <dbReference type="Rhea" id="RHEA-COMP:10287"/>
        <dbReference type="ChEBI" id="CHEBI:15378"/>
        <dbReference type="ChEBI" id="CHEBI:57856"/>
        <dbReference type="ChEBI" id="CHEBI:59789"/>
        <dbReference type="ChEBI" id="CHEBI:74506"/>
        <dbReference type="ChEBI" id="CHEBI:82748"/>
        <dbReference type="EC" id="2.1.1.199"/>
    </reaction>
</comment>
<comment type="subcellular location">
    <subcellularLocation>
        <location evidence="1">Cytoplasm</location>
    </subcellularLocation>
</comment>
<comment type="similarity">
    <text evidence="1">Belongs to the methyltransferase superfamily. RsmH family.</text>
</comment>
<evidence type="ECO:0000255" key="1">
    <source>
        <dbReference type="HAMAP-Rule" id="MF_01007"/>
    </source>
</evidence>
<accession>B0B7I8</accession>